<gene>
    <name evidence="2" type="primary">petL</name>
</gene>
<keyword id="KW-0194">Cyanelle</keyword>
<keyword id="KW-0249">Electron transport</keyword>
<keyword id="KW-0472">Membrane</keyword>
<keyword id="KW-0602">Photosynthesis</keyword>
<keyword id="KW-0934">Plastid</keyword>
<keyword id="KW-0793">Thylakoid</keyword>
<keyword id="KW-0812">Transmembrane</keyword>
<keyword id="KW-1133">Transmembrane helix</keyword>
<keyword id="KW-0813">Transport</keyword>
<organism>
    <name type="scientific">Cyanophora paradoxa</name>
    <dbReference type="NCBI Taxonomy" id="2762"/>
    <lineage>
        <taxon>Eukaryota</taxon>
        <taxon>Glaucocystophyceae</taxon>
        <taxon>Cyanophoraceae</taxon>
        <taxon>Cyanophora</taxon>
    </lineage>
</organism>
<reference key="1">
    <citation type="journal article" date="1995" name="Plant Mol. Biol. Rep.">
        <title>Nucleotide sequence of the cyanelle DNA from Cyanophora paradoxa.</title>
        <authorList>
            <person name="Stirewalt V.L."/>
            <person name="Michalowski C.B."/>
            <person name="Loeffelhardt W."/>
            <person name="Bohnert H.J."/>
            <person name="Bryant D.A."/>
        </authorList>
    </citation>
    <scope>NUCLEOTIDE SEQUENCE [LARGE SCALE GENOMIC DNA]</scope>
    <source>
        <strain>UTEX LB 555 / Pringsheim</strain>
    </source>
</reference>
<reference key="2">
    <citation type="book" date="1997" name="Eukaryotism and symbiosis">
        <title>The complete sequence of the cyanelle genome of Cyanophora paradoxa: the genetic complexity of a primitive plastid.</title>
        <editorList>
            <person name="Schenk H.E.A."/>
            <person name="Herrmann R."/>
            <person name="Jeon K.W."/>
            <person name="Mueller N.E."/>
            <person name="Schwemmler W."/>
        </editorList>
        <authorList>
            <person name="Loeffelhardt W."/>
            <person name="Stirewalt V.L."/>
            <person name="Michalowski C.B."/>
            <person name="Annarella M."/>
            <person name="Farley J.Y."/>
            <person name="Schluchter W.M."/>
            <person name="Chung S."/>
            <person name="Newmann-Spallart C."/>
            <person name="Steiner J.M."/>
            <person name="Jakowitsch J."/>
            <person name="Bohnert H.J."/>
            <person name="Bryant D.A."/>
        </authorList>
    </citation>
    <scope>NUCLEOTIDE SEQUENCE [LARGE SCALE GENOMIC DNA]</scope>
    <source>
        <strain>UTEX LB 555 / Pringsheim</strain>
    </source>
</reference>
<comment type="function">
    <text evidence="2">Component of the cytochrome b6-f complex, which mediates electron transfer between photosystem II (PSII) and photosystem I (PSI), cyclic electron flow around PSI, and state transitions. PetL is important for photoautotrophic growth as well as for electron transfer efficiency and stability of the cytochrome b6-f complex.</text>
</comment>
<comment type="subunit">
    <text evidence="2">The 4 large subunits of the cytochrome b6-f complex are cytochrome b6, subunit IV (17 kDa polypeptide, PetD), cytochrome f and the Rieske protein, while the 4 small subunits are PetG, PetL, PetM and PetN. The complex functions as a dimer.</text>
</comment>
<comment type="subcellular location">
    <subcellularLocation>
        <location evidence="1">Plastid</location>
        <location evidence="1">Cyanelle thylakoid membrane</location>
        <topology evidence="2">Single-pass membrane protein</topology>
    </subcellularLocation>
</comment>
<comment type="similarity">
    <text evidence="2">Belongs to the PetL family.</text>
</comment>
<geneLocation type="cyanelle"/>
<protein>
    <recommendedName>
        <fullName evidence="2">Cytochrome b6-f complex subunit 6</fullName>
    </recommendedName>
    <alternativeName>
        <fullName evidence="2">Cytochrome b6-f complex subunit PetL</fullName>
    </alternativeName>
    <alternativeName>
        <fullName evidence="2">Cytochrome b6-f complex subunit VI</fullName>
    </alternativeName>
</protein>
<proteinExistence type="inferred from homology"/>
<accession>P48102</accession>
<dbReference type="EMBL" id="U30821">
    <property type="protein sequence ID" value="AAA81268.1"/>
    <property type="molecule type" value="Genomic_DNA"/>
</dbReference>
<dbReference type="PIR" id="T06925">
    <property type="entry name" value="T06925"/>
</dbReference>
<dbReference type="RefSeq" id="NP_043237.1">
    <property type="nucleotide sequence ID" value="NC_001675.1"/>
</dbReference>
<dbReference type="SMR" id="P48102"/>
<dbReference type="GeneID" id="801505"/>
<dbReference type="GO" id="GO:0033115">
    <property type="term" value="C:cyanelle thylakoid membrane"/>
    <property type="evidence" value="ECO:0007669"/>
    <property type="project" value="UniProtKB-SubCell"/>
</dbReference>
<dbReference type="GO" id="GO:0009512">
    <property type="term" value="C:cytochrome b6f complex"/>
    <property type="evidence" value="ECO:0007669"/>
    <property type="project" value="InterPro"/>
</dbReference>
<dbReference type="GO" id="GO:0045158">
    <property type="term" value="F:electron transporter, transferring electrons within cytochrome b6/f complex of photosystem II activity"/>
    <property type="evidence" value="ECO:0007669"/>
    <property type="project" value="UniProtKB-UniRule"/>
</dbReference>
<dbReference type="GO" id="GO:0015979">
    <property type="term" value="P:photosynthesis"/>
    <property type="evidence" value="ECO:0007669"/>
    <property type="project" value="UniProtKB-KW"/>
</dbReference>
<dbReference type="HAMAP" id="MF_00433">
    <property type="entry name" value="Cytb6_f_PetL"/>
    <property type="match status" value="1"/>
</dbReference>
<dbReference type="InterPro" id="IPR007802">
    <property type="entry name" value="Cyt_b6/f_cplx_su6"/>
</dbReference>
<dbReference type="Pfam" id="PF05115">
    <property type="entry name" value="PetL"/>
    <property type="match status" value="1"/>
</dbReference>
<sequence>MVEYLVILSGMFGLALACFFGLRSIKLI</sequence>
<feature type="chain" id="PRO_0000220448" description="Cytochrome b6-f complex subunit 6">
    <location>
        <begin position="1"/>
        <end position="28"/>
    </location>
</feature>
<feature type="transmembrane region" description="Helical" evidence="2">
    <location>
        <begin position="2"/>
        <end position="22"/>
    </location>
</feature>
<name>PETL_CYAPA</name>
<evidence type="ECO:0000250" key="1"/>
<evidence type="ECO:0000255" key="2">
    <source>
        <dbReference type="HAMAP-Rule" id="MF_00433"/>
    </source>
</evidence>